<protein>
    <recommendedName>
        <fullName evidence="1">Probable GTP-binding protein EngB</fullName>
    </recommendedName>
</protein>
<feature type="chain" id="PRO_1000005833" description="Probable GTP-binding protein EngB">
    <location>
        <begin position="1"/>
        <end position="209"/>
    </location>
</feature>
<feature type="domain" description="EngB-type G" evidence="1">
    <location>
        <begin position="22"/>
        <end position="198"/>
    </location>
</feature>
<feature type="binding site" evidence="1">
    <location>
        <position position="37"/>
    </location>
    <ligand>
        <name>Mg(2+)</name>
        <dbReference type="ChEBI" id="CHEBI:18420"/>
    </ligand>
</feature>
<feature type="binding site" evidence="1">
    <location>
        <position position="59"/>
    </location>
    <ligand>
        <name>Mg(2+)</name>
        <dbReference type="ChEBI" id="CHEBI:18420"/>
    </ligand>
</feature>
<gene>
    <name evidence="1" type="primary">engB</name>
    <name type="ordered locus">NMC0415</name>
</gene>
<organism>
    <name type="scientific">Neisseria meningitidis serogroup C / serotype 2a (strain ATCC 700532 / DSM 15464 / FAM18)</name>
    <dbReference type="NCBI Taxonomy" id="272831"/>
    <lineage>
        <taxon>Bacteria</taxon>
        <taxon>Pseudomonadati</taxon>
        <taxon>Pseudomonadota</taxon>
        <taxon>Betaproteobacteria</taxon>
        <taxon>Neisseriales</taxon>
        <taxon>Neisseriaceae</taxon>
        <taxon>Neisseria</taxon>
    </lineage>
</organism>
<comment type="function">
    <text evidence="1">Necessary for normal cell division and for the maintenance of normal septation.</text>
</comment>
<comment type="cofactor">
    <cofactor evidence="1">
        <name>Mg(2+)</name>
        <dbReference type="ChEBI" id="CHEBI:18420"/>
    </cofactor>
</comment>
<comment type="similarity">
    <text evidence="1">Belongs to the TRAFAC class TrmE-Era-EngA-EngB-Septin-like GTPase superfamily. EngB GTPase family.</text>
</comment>
<name>ENGB_NEIMF</name>
<reference key="1">
    <citation type="journal article" date="2007" name="PLoS Genet.">
        <title>Meningococcal genetic variation mechanisms viewed through comparative analysis of serogroup C strain FAM18.</title>
        <authorList>
            <person name="Bentley S.D."/>
            <person name="Vernikos G.S."/>
            <person name="Snyder L.A.S."/>
            <person name="Churcher C."/>
            <person name="Arrowsmith C."/>
            <person name="Chillingworth T."/>
            <person name="Cronin A."/>
            <person name="Davis P.H."/>
            <person name="Holroyd N.E."/>
            <person name="Jagels K."/>
            <person name="Maddison M."/>
            <person name="Moule S."/>
            <person name="Rabbinowitsch E."/>
            <person name="Sharp S."/>
            <person name="Unwin L."/>
            <person name="Whitehead S."/>
            <person name="Quail M.A."/>
            <person name="Achtman M."/>
            <person name="Barrell B.G."/>
            <person name="Saunders N.J."/>
            <person name="Parkhill J."/>
        </authorList>
    </citation>
    <scope>NUCLEOTIDE SEQUENCE [LARGE SCALE GENOMIC DNA]</scope>
    <source>
        <strain>ATCC 700532 / DSM 15464 / FAM18</strain>
    </source>
</reference>
<proteinExistence type="inferred from homology"/>
<keyword id="KW-0131">Cell cycle</keyword>
<keyword id="KW-0132">Cell division</keyword>
<keyword id="KW-0342">GTP-binding</keyword>
<keyword id="KW-0460">Magnesium</keyword>
<keyword id="KW-0479">Metal-binding</keyword>
<keyword id="KW-0547">Nucleotide-binding</keyword>
<keyword id="KW-0717">Septation</keyword>
<dbReference type="EMBL" id="AM421808">
    <property type="protein sequence ID" value="CAM09722.1"/>
    <property type="molecule type" value="Genomic_DNA"/>
</dbReference>
<dbReference type="SMR" id="A1KS92"/>
<dbReference type="KEGG" id="nmc:NMC0415"/>
<dbReference type="HOGENOM" id="CLU_033732_1_0_4"/>
<dbReference type="Proteomes" id="UP000002286">
    <property type="component" value="Chromosome"/>
</dbReference>
<dbReference type="GO" id="GO:0005829">
    <property type="term" value="C:cytosol"/>
    <property type="evidence" value="ECO:0007669"/>
    <property type="project" value="TreeGrafter"/>
</dbReference>
<dbReference type="GO" id="GO:0005525">
    <property type="term" value="F:GTP binding"/>
    <property type="evidence" value="ECO:0007669"/>
    <property type="project" value="UniProtKB-UniRule"/>
</dbReference>
<dbReference type="GO" id="GO:0046872">
    <property type="term" value="F:metal ion binding"/>
    <property type="evidence" value="ECO:0007669"/>
    <property type="project" value="UniProtKB-KW"/>
</dbReference>
<dbReference type="GO" id="GO:0000917">
    <property type="term" value="P:division septum assembly"/>
    <property type="evidence" value="ECO:0007669"/>
    <property type="project" value="UniProtKB-KW"/>
</dbReference>
<dbReference type="CDD" id="cd01876">
    <property type="entry name" value="YihA_EngB"/>
    <property type="match status" value="1"/>
</dbReference>
<dbReference type="FunFam" id="3.40.50.300:FF:000098">
    <property type="entry name" value="Probable GTP-binding protein EngB"/>
    <property type="match status" value="1"/>
</dbReference>
<dbReference type="Gene3D" id="3.40.50.300">
    <property type="entry name" value="P-loop containing nucleotide triphosphate hydrolases"/>
    <property type="match status" value="1"/>
</dbReference>
<dbReference type="HAMAP" id="MF_00321">
    <property type="entry name" value="GTPase_EngB"/>
    <property type="match status" value="1"/>
</dbReference>
<dbReference type="InterPro" id="IPR030393">
    <property type="entry name" value="G_ENGB_dom"/>
</dbReference>
<dbReference type="InterPro" id="IPR006073">
    <property type="entry name" value="GTP-bd"/>
</dbReference>
<dbReference type="InterPro" id="IPR019987">
    <property type="entry name" value="GTP-bd_ribosome_bio_YsxC"/>
</dbReference>
<dbReference type="InterPro" id="IPR027417">
    <property type="entry name" value="P-loop_NTPase"/>
</dbReference>
<dbReference type="NCBIfam" id="TIGR03598">
    <property type="entry name" value="GTPase_YsxC"/>
    <property type="match status" value="1"/>
</dbReference>
<dbReference type="PANTHER" id="PTHR11649:SF13">
    <property type="entry name" value="ENGB-TYPE G DOMAIN-CONTAINING PROTEIN"/>
    <property type="match status" value="1"/>
</dbReference>
<dbReference type="PANTHER" id="PTHR11649">
    <property type="entry name" value="MSS1/TRME-RELATED GTP-BINDING PROTEIN"/>
    <property type="match status" value="1"/>
</dbReference>
<dbReference type="Pfam" id="PF01926">
    <property type="entry name" value="MMR_HSR1"/>
    <property type="match status" value="1"/>
</dbReference>
<dbReference type="SUPFAM" id="SSF52540">
    <property type="entry name" value="P-loop containing nucleoside triphosphate hydrolases"/>
    <property type="match status" value="1"/>
</dbReference>
<dbReference type="PROSITE" id="PS51706">
    <property type="entry name" value="G_ENGB"/>
    <property type="match status" value="1"/>
</dbReference>
<evidence type="ECO:0000255" key="1">
    <source>
        <dbReference type="HAMAP-Rule" id="MF_00321"/>
    </source>
</evidence>
<sequence length="209" mass="23562">MNLFQNAKFFTTVNHLKDLPDTPLEIAFVGRSNAGKSSAINTLTNHVRLAYVSKTPGRTQHINFFELQNGNFMVDLPGYGYAQVPEAVRAHWVNLLGDYLQQRKQLIGLVLIMDARHPLKELDIRMLDFFHTTGRPVHILLSKADKLSKNEQIKTLSQVKKLLKPYSDRQNISVQLFSSLKKQGIDEANRTVGSWFDAADAAASSPKEN</sequence>
<accession>A1KS92</accession>